<protein>
    <recommendedName>
        <fullName>Acetyl-coenzyme A synthetase 2</fullName>
        <ecNumber>6.2.1.1</ecNumber>
    </recommendedName>
    <alternativeName>
        <fullName>Acetate--CoA ligase 2</fullName>
    </alternativeName>
    <alternativeName>
        <fullName>Acyl-activating enzyme 2</fullName>
    </alternativeName>
</protein>
<evidence type="ECO:0000250" key="1"/>
<evidence type="ECO:0000305" key="2"/>
<sequence length="675" mass="74508">MTVKEHKVVHEAQNVEALHAPEHFYKSQPGPSYIKDMKQYKEMYKQSVEDPENFFGEKARELLDWDRPFTRSKYGSLENGDVTWFLNGELNAAYNCVDRHAFANPDKPALIYEADEEADNRMITFSELLRQVSRVAGVLQSWGVKKGDTVAVYLPMIPEAVVAMLAIARLGAIHSVVFAGFSAGSLKDRVVDAGCKVVITCDEGKRGGKTVHTKKIVDEGLNGISLVSHILVFQRTGSEGIPMTAGRDYWWHEETAKQRSYLPPVPCNSEDPLFLLYTSGSTGSPKGVVHSTAGYLLGAAMTTRYVFDIHPEDVLFTAGDVGWITGHTYALYGPLVLGTASIIFESTPAYPDYGRYWRIIQRHKATHFYVAPTALRLIKRVGEAEIPKYDISSLRVLGSVGEPISPELWEWYYEKVGNKNCVICDTMWQTESGSHLIAPQAGAVPTKPGSATVPFFGVDACIIDPVTGIELQGNDVEGVLAVKSSWPSMARSVWQNHHRYVDTYLKPYPGYYFTGDGAGRDHDGYYWIRGRVDDVVNVSGHRLSTAEIEASLTNHDNVSESAVVGIADELTGQSVIAFVSLKDGSSRESSAVVAMRRELVLQVRGEIGPFAAPKCVILVKDLPKTRSGKIMRRVLRKVASNEADQLGDLSTMANSEVVPSIIAAVDEQFFAEKKK</sequence>
<feature type="chain" id="PRO_0000208422" description="Acetyl-coenzyme A synthetase 2">
    <location>
        <begin position="1"/>
        <end position="675"/>
    </location>
</feature>
<feature type="binding site" evidence="1">
    <location>
        <begin position="206"/>
        <end position="209"/>
    </location>
    <ligand>
        <name>CoA</name>
        <dbReference type="ChEBI" id="CHEBI:57287"/>
    </ligand>
</feature>
<feature type="binding site" evidence="1">
    <location>
        <position position="325"/>
    </location>
    <ligand>
        <name>CoA</name>
        <dbReference type="ChEBI" id="CHEBI:57287"/>
    </ligand>
</feature>
<feature type="binding site" evidence="1">
    <location>
        <begin position="401"/>
        <end position="403"/>
    </location>
    <ligand>
        <name>ATP</name>
        <dbReference type="ChEBI" id="CHEBI:30616"/>
    </ligand>
</feature>
<feature type="binding site" evidence="1">
    <location>
        <begin position="425"/>
        <end position="430"/>
    </location>
    <ligand>
        <name>ATP</name>
        <dbReference type="ChEBI" id="CHEBI:30616"/>
    </ligand>
</feature>
<feature type="binding site" evidence="1">
    <location>
        <position position="516"/>
    </location>
    <ligand>
        <name>ATP</name>
        <dbReference type="ChEBI" id="CHEBI:30616"/>
    </ligand>
</feature>
<feature type="binding site" evidence="1">
    <location>
        <position position="531"/>
    </location>
    <ligand>
        <name>ATP</name>
        <dbReference type="ChEBI" id="CHEBI:30616"/>
    </ligand>
</feature>
<feature type="binding site" evidence="1">
    <location>
        <position position="539"/>
    </location>
    <ligand>
        <name>CoA</name>
        <dbReference type="ChEBI" id="CHEBI:57287"/>
    </ligand>
</feature>
<feature type="binding site" evidence="1">
    <location>
        <position position="542"/>
    </location>
    <ligand>
        <name>ATP</name>
        <dbReference type="ChEBI" id="CHEBI:30616"/>
    </ligand>
</feature>
<feature type="binding site" evidence="1">
    <location>
        <position position="604"/>
    </location>
    <ligand>
        <name>CoA</name>
        <dbReference type="ChEBI" id="CHEBI:57287"/>
    </ligand>
</feature>
<accession>Q96VC7</accession>
<proteinExistence type="inferred from homology"/>
<name>ACS2_ZYGBA</name>
<gene>
    <name type="primary">ACS2</name>
</gene>
<keyword id="KW-0067">ATP-binding</keyword>
<keyword id="KW-0436">Ligase</keyword>
<keyword id="KW-0547">Nucleotide-binding</keyword>
<reference key="1">
    <citation type="journal article" date="2003" name="Appl. Environ. Microbiol.">
        <title>The spoilage yeast Zygosaccharomyces bailii forms mitotic spores: a screening method for haploidization.</title>
        <authorList>
            <person name="Rodrigues F."/>
            <person name="Luovico P."/>
            <person name="Sousa M.J."/>
            <person name="Steensma H.Y."/>
            <person name="Corte-Real M."/>
            <person name="Leao C."/>
        </authorList>
    </citation>
    <scope>NUCLEOTIDE SEQUENCE [GENOMIC DNA]</scope>
    <source>
        <strain>ISA 1307</strain>
    </source>
</reference>
<dbReference type="EC" id="6.2.1.1"/>
<dbReference type="EMBL" id="AJ314837">
    <property type="protein sequence ID" value="CAC41017.1"/>
    <property type="molecule type" value="Genomic_DNA"/>
</dbReference>
<dbReference type="SMR" id="Q96VC7"/>
<dbReference type="GO" id="GO:0005829">
    <property type="term" value="C:cytosol"/>
    <property type="evidence" value="ECO:0007669"/>
    <property type="project" value="TreeGrafter"/>
</dbReference>
<dbReference type="GO" id="GO:0003987">
    <property type="term" value="F:acetate-CoA ligase activity"/>
    <property type="evidence" value="ECO:0007669"/>
    <property type="project" value="UniProtKB-EC"/>
</dbReference>
<dbReference type="GO" id="GO:0016208">
    <property type="term" value="F:AMP binding"/>
    <property type="evidence" value="ECO:0007669"/>
    <property type="project" value="InterPro"/>
</dbReference>
<dbReference type="GO" id="GO:0005524">
    <property type="term" value="F:ATP binding"/>
    <property type="evidence" value="ECO:0007669"/>
    <property type="project" value="UniProtKB-KW"/>
</dbReference>
<dbReference type="GO" id="GO:0019427">
    <property type="term" value="P:acetyl-CoA biosynthetic process from acetate"/>
    <property type="evidence" value="ECO:0007669"/>
    <property type="project" value="InterPro"/>
</dbReference>
<dbReference type="CDD" id="cd05966">
    <property type="entry name" value="ACS"/>
    <property type="match status" value="1"/>
</dbReference>
<dbReference type="FunFam" id="3.40.50.12780:FF:000001">
    <property type="entry name" value="Acetyl-coenzyme A synthetase"/>
    <property type="match status" value="1"/>
</dbReference>
<dbReference type="Gene3D" id="3.30.300.30">
    <property type="match status" value="1"/>
</dbReference>
<dbReference type="Gene3D" id="3.40.50.12780">
    <property type="entry name" value="N-terminal domain of ligase-like"/>
    <property type="match status" value="1"/>
</dbReference>
<dbReference type="InterPro" id="IPR011904">
    <property type="entry name" value="Ac_CoA_lig"/>
</dbReference>
<dbReference type="InterPro" id="IPR032387">
    <property type="entry name" value="ACAS_N"/>
</dbReference>
<dbReference type="InterPro" id="IPR025110">
    <property type="entry name" value="AMP-bd_C"/>
</dbReference>
<dbReference type="InterPro" id="IPR045851">
    <property type="entry name" value="AMP-bd_C_sf"/>
</dbReference>
<dbReference type="InterPro" id="IPR020845">
    <property type="entry name" value="AMP-binding_CS"/>
</dbReference>
<dbReference type="InterPro" id="IPR000873">
    <property type="entry name" value="AMP-dep_synth/lig_dom"/>
</dbReference>
<dbReference type="InterPro" id="IPR042099">
    <property type="entry name" value="ANL_N_sf"/>
</dbReference>
<dbReference type="NCBIfam" id="TIGR02188">
    <property type="entry name" value="Ac_CoA_lig_AcsA"/>
    <property type="match status" value="1"/>
</dbReference>
<dbReference type="NCBIfam" id="NF001208">
    <property type="entry name" value="PRK00174.1"/>
    <property type="match status" value="1"/>
</dbReference>
<dbReference type="PANTHER" id="PTHR24095">
    <property type="entry name" value="ACETYL-COENZYME A SYNTHETASE"/>
    <property type="match status" value="1"/>
</dbReference>
<dbReference type="PANTHER" id="PTHR24095:SF245">
    <property type="entry name" value="ACETYL-COENZYME A SYNTHETASE 2"/>
    <property type="match status" value="1"/>
</dbReference>
<dbReference type="Pfam" id="PF16177">
    <property type="entry name" value="ACAS_N"/>
    <property type="match status" value="1"/>
</dbReference>
<dbReference type="Pfam" id="PF00501">
    <property type="entry name" value="AMP-binding"/>
    <property type="match status" value="1"/>
</dbReference>
<dbReference type="Pfam" id="PF13193">
    <property type="entry name" value="AMP-binding_C"/>
    <property type="match status" value="1"/>
</dbReference>
<dbReference type="SUPFAM" id="SSF56801">
    <property type="entry name" value="Acetyl-CoA synthetase-like"/>
    <property type="match status" value="1"/>
</dbReference>
<dbReference type="PROSITE" id="PS00455">
    <property type="entry name" value="AMP_BINDING"/>
    <property type="match status" value="1"/>
</dbReference>
<comment type="catalytic activity">
    <reaction>
        <text>acetate + ATP + CoA = acetyl-CoA + AMP + diphosphate</text>
        <dbReference type="Rhea" id="RHEA:23176"/>
        <dbReference type="ChEBI" id="CHEBI:30089"/>
        <dbReference type="ChEBI" id="CHEBI:30616"/>
        <dbReference type="ChEBI" id="CHEBI:33019"/>
        <dbReference type="ChEBI" id="CHEBI:57287"/>
        <dbReference type="ChEBI" id="CHEBI:57288"/>
        <dbReference type="ChEBI" id="CHEBI:456215"/>
        <dbReference type="EC" id="6.2.1.1"/>
    </reaction>
</comment>
<comment type="similarity">
    <text evidence="2">Belongs to the ATP-dependent AMP-binding enzyme family.</text>
</comment>
<organism>
    <name type="scientific">Zygosaccharomyces bailii</name>
    <dbReference type="NCBI Taxonomy" id="4954"/>
    <lineage>
        <taxon>Eukaryota</taxon>
        <taxon>Fungi</taxon>
        <taxon>Dikarya</taxon>
        <taxon>Ascomycota</taxon>
        <taxon>Saccharomycotina</taxon>
        <taxon>Saccharomycetes</taxon>
        <taxon>Saccharomycetales</taxon>
        <taxon>Saccharomycetaceae</taxon>
        <taxon>Zygosaccharomyces</taxon>
    </lineage>
</organism>